<organism>
    <name type="scientific">Mus musculus</name>
    <name type="common">Mouse</name>
    <dbReference type="NCBI Taxonomy" id="10090"/>
    <lineage>
        <taxon>Eukaryota</taxon>
        <taxon>Metazoa</taxon>
        <taxon>Chordata</taxon>
        <taxon>Craniata</taxon>
        <taxon>Vertebrata</taxon>
        <taxon>Euteleostomi</taxon>
        <taxon>Mammalia</taxon>
        <taxon>Eutheria</taxon>
        <taxon>Euarchontoglires</taxon>
        <taxon>Glires</taxon>
        <taxon>Rodentia</taxon>
        <taxon>Myomorpha</taxon>
        <taxon>Muroidea</taxon>
        <taxon>Muridae</taxon>
        <taxon>Murinae</taxon>
        <taxon>Mus</taxon>
        <taxon>Mus</taxon>
    </lineage>
</organism>
<proteinExistence type="evidence at transcript level"/>
<comment type="function">
    <text evidence="5">Catalyzes the hydrolysis of acyl-CoAs into free fatty acids and coenzyme A (CoASH), regulating their respective intracellular levels. Active on long chain acyl-CoAs.</text>
</comment>
<comment type="subcellular location">
    <subcellularLocation>
        <location evidence="4 5">Mitochondrion</location>
    </subcellularLocation>
</comment>
<comment type="similarity">
    <text evidence="2">Belongs to the acyl coenzyme A hydrolase family.</text>
</comment>
<reference evidence="5" key="1">
    <citation type="journal article" date="1999" name="J. Biol. Chem.">
        <title>Molecular cloning and characterization of MT-ACT48, a novel mitochondrial acyl-CoA thioesterase.</title>
        <authorList>
            <person name="Poupon V."/>
            <person name="Begue B."/>
            <person name="Gagnon J."/>
            <person name="Dautry-Varsat A."/>
            <person name="Cerf-Bensussan N."/>
            <person name="Benmerah A."/>
        </authorList>
    </citation>
    <scope>NUCLEOTIDE SEQUENCE [MRNA]</scope>
    <scope>SUBCELLULAR LOCATION</scope>
</reference>
<reference evidence="6" key="2">
    <citation type="journal article" date="2004" name="Genome Res.">
        <title>The status, quality, and expansion of the NIH full-length cDNA project: the Mammalian Gene Collection (MGC).</title>
        <authorList>
            <consortium name="The MGC Project Team"/>
        </authorList>
    </citation>
    <scope>NUCLEOTIDE SEQUENCE [LARGE SCALE MRNA]</scope>
</reference>
<reference evidence="5 7" key="3">
    <citation type="journal article" date="2007" name="J. Evol. Biol.">
        <title>The evolutionary fate of recently duplicated retrogenes in mice.</title>
        <authorList>
            <person name="Gayral P."/>
            <person name="Caminade P."/>
            <person name="Boursot P."/>
            <person name="Galtier N."/>
        </authorList>
    </citation>
    <scope>NUCLEOTIDE SEQUENCE [GENOMIC DNA] OF 60-426</scope>
</reference>
<evidence type="ECO:0000250" key="1">
    <source>
        <dbReference type="UniProtKB" id="Q9R0X4"/>
    </source>
</evidence>
<evidence type="ECO:0000255" key="2"/>
<evidence type="ECO:0000255" key="3">
    <source>
        <dbReference type="PROSITE-ProRule" id="PRU01106"/>
    </source>
</evidence>
<evidence type="ECO:0000269" key="4">
    <source>
    </source>
</evidence>
<evidence type="ECO:0000305" key="5"/>
<evidence type="ECO:0000312" key="6">
    <source>
        <dbReference type="EMBL" id="AAI08961.1"/>
    </source>
</evidence>
<evidence type="ECO:0000312" key="7">
    <source>
        <dbReference type="EMBL" id="ABK20321.1"/>
    </source>
</evidence>
<evidence type="ECO:0000312" key="8">
    <source>
        <dbReference type="MGI" id="MGI:1928940"/>
    </source>
</evidence>
<accession>Q32MW3</accession>
<accession>A0FJF7</accession>
<accession>Q32MW2</accession>
<sequence length="439" mass="50552">MKRAAMRLWTLNKGLLTHGRGLSQGSQYKISEPLHIHQVQVKLREIVGISTVWRDHVQAMEERKLLHSFLPKSQKVLPPRKIRDSYIEVLLPLGTDPELRDKYVTVQNTVRFGRILEDLDSLGVLVCYMHNHNHSTNMSLLSIVTVLVDKIDMCKHSLSPEQDIKFTGHVSWVGNTTMEVKMKMFQLHDDETYWPVLDATFVMVAQDSENKRPAFVNPLIPENKEEEELFTQGELNKSRRIAFSTSSLLKVAPSSEERNIIHELFLSTLDPKTISFQSRILPPKAVWMEDTKLKSLDICHPQERNVFNRIFGGFLMRKAYELAWATACSFGGSRPYVVTVDDIMFQKPVEVGSLLFLSSQVCFTQGNYIQVRVHSEVFSLDSREHMTTNVFHFTFMSEKEVPLIFPKTYGESMLYLDGQRHFKSMSTPVTLKKDYPVEP</sequence>
<feature type="transit peptide" description="Mitochondrion" evidence="1">
    <location>
        <begin position="1"/>
        <end position="21"/>
    </location>
</feature>
<feature type="chain" id="PRO_0000306248" description="Acyl-coenzyme A thioesterase 10, mitochondrial">
    <location>
        <begin position="22"/>
        <end position="439"/>
    </location>
</feature>
<feature type="domain" description="HotDog ACOT-type 1" evidence="3">
    <location>
        <begin position="85"/>
        <end position="209"/>
    </location>
</feature>
<feature type="domain" description="HotDog ACOT-type 2" evidence="3">
    <location>
        <begin position="289"/>
        <end position="401"/>
    </location>
</feature>
<feature type="sequence conflict" description="In Ref. 1; CAB45255." evidence="5" ref="1">
    <original>L</original>
    <variation>F</variation>
    <location>
        <position position="119"/>
    </location>
</feature>
<feature type="sequence conflict" description="In Ref. 3; ABK20321." evidence="5" ref="3">
    <original>L</original>
    <variation>P</variation>
    <location>
        <position position="140"/>
    </location>
</feature>
<feature type="sequence conflict" description="In Ref. 3; ABK20321." evidence="5" ref="3">
    <original>T</original>
    <variation>K</variation>
    <location>
        <position position="192"/>
    </location>
</feature>
<feature type="sequence conflict" description="In Ref. 2; AAI08961." evidence="5" ref="2">
    <original>P</original>
    <variation>L</variation>
    <location>
        <position position="283"/>
    </location>
</feature>
<feature type="sequence conflict" description="In Ref. 3; ABK20321." evidence="5" ref="3">
    <original>S</original>
    <variation>G</variation>
    <location>
        <position position="329"/>
    </location>
</feature>
<feature type="sequence conflict" description="In Ref. 3; ABK20321." evidence="5" ref="3">
    <original>K</original>
    <variation>F</variation>
    <location>
        <position position="407"/>
    </location>
</feature>
<protein>
    <recommendedName>
        <fullName>Acyl-coenzyme A thioesterase 10, mitochondrial</fullName>
        <shortName>Acyl-CoA thioesterase 10</shortName>
        <ecNumber>3.1.2.-</ecNumber>
    </recommendedName>
    <alternativeName>
        <fullName>Mitochondrial 48 kDa acyl-CoA thioester hydrolase 2</fullName>
        <shortName>Mt-ACT48.2</shortName>
    </alternativeName>
</protein>
<name>ACO10_MOUSE</name>
<gene>
    <name evidence="8" type="primary">Acot10</name>
</gene>
<dbReference type="EC" id="3.1.2.-"/>
<dbReference type="EMBL" id="AJ238894">
    <property type="protein sequence ID" value="CAB45255.1"/>
    <property type="molecule type" value="mRNA"/>
</dbReference>
<dbReference type="EMBL" id="BC108959">
    <property type="protein sequence ID" value="AAI08960.1"/>
    <property type="molecule type" value="mRNA"/>
</dbReference>
<dbReference type="EMBL" id="BC108960">
    <property type="protein sequence ID" value="AAI08961.1"/>
    <property type="molecule type" value="mRNA"/>
</dbReference>
<dbReference type="EMBL" id="EF014736">
    <property type="protein sequence ID" value="ABK20321.1"/>
    <property type="molecule type" value="Genomic_DNA"/>
</dbReference>
<dbReference type="CCDS" id="CCDS27395.1"/>
<dbReference type="RefSeq" id="NP_073727.2">
    <property type="nucleotide sequence ID" value="NM_022816.2"/>
</dbReference>
<dbReference type="SMR" id="Q32MW3"/>
<dbReference type="FunCoup" id="Q32MW3">
    <property type="interactions" value="904"/>
</dbReference>
<dbReference type="STRING" id="10090.ENSMUSP00000051333"/>
<dbReference type="iPTMnet" id="Q32MW3"/>
<dbReference type="PhosphoSitePlus" id="Q32MW3"/>
<dbReference type="SwissPalm" id="Q32MW3"/>
<dbReference type="jPOST" id="Q32MW3"/>
<dbReference type="PaxDb" id="10090-ENSMUSP00000051333"/>
<dbReference type="PeptideAtlas" id="Q32MW3"/>
<dbReference type="ProteomicsDB" id="285591"/>
<dbReference type="Pumba" id="Q32MW3"/>
<dbReference type="DNASU" id="64833"/>
<dbReference type="Ensembl" id="ENSMUST00000052910.6">
    <property type="protein sequence ID" value="ENSMUSP00000051333.5"/>
    <property type="gene ID" value="ENSMUSG00000047565.6"/>
</dbReference>
<dbReference type="GeneID" id="64833"/>
<dbReference type="KEGG" id="mmu:64833"/>
<dbReference type="UCSC" id="uc007vio.1">
    <property type="organism name" value="mouse"/>
</dbReference>
<dbReference type="AGR" id="MGI:1928940"/>
<dbReference type="CTD" id="64833"/>
<dbReference type="MGI" id="MGI:1928940">
    <property type="gene designation" value="Acot10"/>
</dbReference>
<dbReference type="VEuPathDB" id="HostDB:ENSMUSG00000047565"/>
<dbReference type="eggNOG" id="KOG2763">
    <property type="taxonomic scope" value="Eukaryota"/>
</dbReference>
<dbReference type="GeneTree" id="ENSGT00390000005330"/>
<dbReference type="HOGENOM" id="CLU_032862_2_1_1"/>
<dbReference type="InParanoid" id="Q32MW3"/>
<dbReference type="OMA" id="REMLWYI"/>
<dbReference type="OrthoDB" id="331699at2759"/>
<dbReference type="PhylomeDB" id="Q32MW3"/>
<dbReference type="TreeFam" id="TF313352"/>
<dbReference type="BioGRID-ORCS" id="64833">
    <property type="hits" value="3 hits in 78 CRISPR screens"/>
</dbReference>
<dbReference type="ChiTaRS" id="Acot10">
    <property type="organism name" value="mouse"/>
</dbReference>
<dbReference type="PRO" id="PR:Q32MW3"/>
<dbReference type="Proteomes" id="UP000000589">
    <property type="component" value="Chromosome 15"/>
</dbReference>
<dbReference type="RNAct" id="Q32MW3">
    <property type="molecule type" value="protein"/>
</dbReference>
<dbReference type="Bgee" id="ENSMUSG00000047565">
    <property type="expression patterns" value="Expressed in spermatid and 3 other cell types or tissues"/>
</dbReference>
<dbReference type="GO" id="GO:0005739">
    <property type="term" value="C:mitochondrion"/>
    <property type="evidence" value="ECO:0007005"/>
    <property type="project" value="MGI"/>
</dbReference>
<dbReference type="GO" id="GO:0052689">
    <property type="term" value="F:carboxylic ester hydrolase activity"/>
    <property type="evidence" value="ECO:0007669"/>
    <property type="project" value="UniProtKB-KW"/>
</dbReference>
<dbReference type="GO" id="GO:0047617">
    <property type="term" value="F:fatty acyl-CoA hydrolase activity"/>
    <property type="evidence" value="ECO:0000314"/>
    <property type="project" value="MGI"/>
</dbReference>
<dbReference type="GO" id="GO:0006637">
    <property type="term" value="P:acyl-CoA metabolic process"/>
    <property type="evidence" value="ECO:0000304"/>
    <property type="project" value="MGI"/>
</dbReference>
<dbReference type="CDD" id="cd03442">
    <property type="entry name" value="BFIT_BACH"/>
    <property type="match status" value="2"/>
</dbReference>
<dbReference type="FunFam" id="3.10.129.10:FF:000012">
    <property type="entry name" value="Acyl-coenzyme A thioesterase 9, mitochondrial"/>
    <property type="match status" value="1"/>
</dbReference>
<dbReference type="FunFam" id="3.10.129.10:FF:000016">
    <property type="entry name" value="Acyl-coenzyme A thioesterase 9, mitochondrial"/>
    <property type="match status" value="1"/>
</dbReference>
<dbReference type="Gene3D" id="3.10.129.10">
    <property type="entry name" value="Hotdog Thioesterase"/>
    <property type="match status" value="2"/>
</dbReference>
<dbReference type="InterPro" id="IPR033120">
    <property type="entry name" value="HOTDOG_ACOT"/>
</dbReference>
<dbReference type="InterPro" id="IPR029069">
    <property type="entry name" value="HotDog_dom_sf"/>
</dbReference>
<dbReference type="PANTHER" id="PTHR12655">
    <property type="entry name" value="ACYL-COA THIOESTERASE"/>
    <property type="match status" value="1"/>
</dbReference>
<dbReference type="PANTHER" id="PTHR12655:SF0">
    <property type="entry name" value="ACYL-COENZYME A THIOESTERASE 9, MITOCHONDRIAL"/>
    <property type="match status" value="1"/>
</dbReference>
<dbReference type="SUPFAM" id="SSF54637">
    <property type="entry name" value="Thioesterase/thiol ester dehydrase-isomerase"/>
    <property type="match status" value="2"/>
</dbReference>
<dbReference type="PROSITE" id="PS51770">
    <property type="entry name" value="HOTDOG_ACOT"/>
    <property type="match status" value="2"/>
</dbReference>
<keyword id="KW-0378">Hydrolase</keyword>
<keyword id="KW-0496">Mitochondrion</keyword>
<keyword id="KW-1185">Reference proteome</keyword>
<keyword id="KW-0677">Repeat</keyword>
<keyword id="KW-0719">Serine esterase</keyword>
<keyword id="KW-0809">Transit peptide</keyword>